<feature type="chain" id="PRO_1000201401" description="Elongation factor Tu">
    <location>
        <begin position="1"/>
        <end position="400"/>
    </location>
</feature>
<feature type="domain" description="tr-type G">
    <location>
        <begin position="10"/>
        <end position="209"/>
    </location>
</feature>
<feature type="region of interest" description="G1" evidence="1">
    <location>
        <begin position="19"/>
        <end position="26"/>
    </location>
</feature>
<feature type="region of interest" description="G2" evidence="1">
    <location>
        <begin position="60"/>
        <end position="64"/>
    </location>
</feature>
<feature type="region of interest" description="G3" evidence="1">
    <location>
        <begin position="81"/>
        <end position="84"/>
    </location>
</feature>
<feature type="region of interest" description="G4" evidence="1">
    <location>
        <begin position="136"/>
        <end position="139"/>
    </location>
</feature>
<feature type="region of interest" description="G5" evidence="1">
    <location>
        <begin position="174"/>
        <end position="176"/>
    </location>
</feature>
<feature type="binding site" evidence="2">
    <location>
        <begin position="19"/>
        <end position="26"/>
    </location>
    <ligand>
        <name>GTP</name>
        <dbReference type="ChEBI" id="CHEBI:37565"/>
    </ligand>
</feature>
<feature type="binding site" evidence="2">
    <location>
        <position position="26"/>
    </location>
    <ligand>
        <name>Mg(2+)</name>
        <dbReference type="ChEBI" id="CHEBI:18420"/>
    </ligand>
</feature>
<feature type="binding site" evidence="2">
    <location>
        <begin position="81"/>
        <end position="85"/>
    </location>
    <ligand>
        <name>GTP</name>
        <dbReference type="ChEBI" id="CHEBI:37565"/>
    </ligand>
</feature>
<feature type="binding site" evidence="2">
    <location>
        <begin position="136"/>
        <end position="139"/>
    </location>
    <ligand>
        <name>GTP</name>
        <dbReference type="ChEBI" id="CHEBI:37565"/>
    </ligand>
</feature>
<proteinExistence type="inferred from homology"/>
<comment type="function">
    <text evidence="2">GTP hydrolase that promotes the GTP-dependent binding of aminoacyl-tRNA to the A-site of ribosomes during protein biosynthesis.</text>
</comment>
<comment type="catalytic activity">
    <reaction evidence="2">
        <text>GTP + H2O = GDP + phosphate + H(+)</text>
        <dbReference type="Rhea" id="RHEA:19669"/>
        <dbReference type="ChEBI" id="CHEBI:15377"/>
        <dbReference type="ChEBI" id="CHEBI:15378"/>
        <dbReference type="ChEBI" id="CHEBI:37565"/>
        <dbReference type="ChEBI" id="CHEBI:43474"/>
        <dbReference type="ChEBI" id="CHEBI:58189"/>
        <dbReference type="EC" id="3.6.5.3"/>
    </reaction>
    <physiologicalReaction direction="left-to-right" evidence="2">
        <dbReference type="Rhea" id="RHEA:19670"/>
    </physiologicalReaction>
</comment>
<comment type="subunit">
    <text evidence="2">Monomer.</text>
</comment>
<comment type="subcellular location">
    <subcellularLocation>
        <location evidence="2">Cytoplasm</location>
    </subcellularLocation>
</comment>
<comment type="similarity">
    <text evidence="2">Belongs to the TRAFAC class translation factor GTPase superfamily. Classic translation factor GTPase family. EF-Tu/EF-1A subfamily.</text>
</comment>
<evidence type="ECO:0000250" key="1"/>
<evidence type="ECO:0000255" key="2">
    <source>
        <dbReference type="HAMAP-Rule" id="MF_00118"/>
    </source>
</evidence>
<reference key="1">
    <citation type="journal article" date="2012" name="BMC Microbiol.">
        <title>Genome sequence of Desulfitobacterium hafniense DCB-2, a Gram-positive anaerobe capable of dehalogenation and metal reduction.</title>
        <authorList>
            <person name="Kim S.H."/>
            <person name="Harzman C."/>
            <person name="Davis J.K."/>
            <person name="Hutcheson R."/>
            <person name="Broderick J.B."/>
            <person name="Marsh T.L."/>
            <person name="Tiedje J.M."/>
        </authorList>
    </citation>
    <scope>NUCLEOTIDE SEQUENCE [LARGE SCALE GENOMIC DNA]</scope>
    <source>
        <strain>DSM 10664 / DCB-2</strain>
    </source>
</reference>
<keyword id="KW-0963">Cytoplasm</keyword>
<keyword id="KW-0251">Elongation factor</keyword>
<keyword id="KW-0342">GTP-binding</keyword>
<keyword id="KW-0378">Hydrolase</keyword>
<keyword id="KW-0460">Magnesium</keyword>
<keyword id="KW-0479">Metal-binding</keyword>
<keyword id="KW-0547">Nucleotide-binding</keyword>
<keyword id="KW-0648">Protein biosynthesis</keyword>
<dbReference type="EC" id="3.6.5.3" evidence="2"/>
<dbReference type="EMBL" id="CP001336">
    <property type="protein sequence ID" value="ACL18487.1"/>
    <property type="molecule type" value="Genomic_DNA"/>
</dbReference>
<dbReference type="RefSeq" id="WP_005810165.1">
    <property type="nucleotide sequence ID" value="NC_011830.1"/>
</dbReference>
<dbReference type="SMR" id="B8G1W4"/>
<dbReference type="KEGG" id="dhd:Dhaf_0420"/>
<dbReference type="HOGENOM" id="CLU_007265_0_1_9"/>
<dbReference type="Proteomes" id="UP000007726">
    <property type="component" value="Chromosome"/>
</dbReference>
<dbReference type="GO" id="GO:0005829">
    <property type="term" value="C:cytosol"/>
    <property type="evidence" value="ECO:0007669"/>
    <property type="project" value="TreeGrafter"/>
</dbReference>
<dbReference type="GO" id="GO:0005525">
    <property type="term" value="F:GTP binding"/>
    <property type="evidence" value="ECO:0007669"/>
    <property type="project" value="UniProtKB-UniRule"/>
</dbReference>
<dbReference type="GO" id="GO:0003924">
    <property type="term" value="F:GTPase activity"/>
    <property type="evidence" value="ECO:0007669"/>
    <property type="project" value="InterPro"/>
</dbReference>
<dbReference type="GO" id="GO:0003746">
    <property type="term" value="F:translation elongation factor activity"/>
    <property type="evidence" value="ECO:0007669"/>
    <property type="project" value="UniProtKB-UniRule"/>
</dbReference>
<dbReference type="CDD" id="cd01884">
    <property type="entry name" value="EF_Tu"/>
    <property type="match status" value="1"/>
</dbReference>
<dbReference type="CDD" id="cd03697">
    <property type="entry name" value="EFTU_II"/>
    <property type="match status" value="1"/>
</dbReference>
<dbReference type="CDD" id="cd03707">
    <property type="entry name" value="EFTU_III"/>
    <property type="match status" value="1"/>
</dbReference>
<dbReference type="FunFam" id="2.40.30.10:FF:000001">
    <property type="entry name" value="Elongation factor Tu"/>
    <property type="match status" value="1"/>
</dbReference>
<dbReference type="FunFam" id="3.40.50.300:FF:000003">
    <property type="entry name" value="Elongation factor Tu"/>
    <property type="match status" value="1"/>
</dbReference>
<dbReference type="Gene3D" id="3.40.50.300">
    <property type="entry name" value="P-loop containing nucleotide triphosphate hydrolases"/>
    <property type="match status" value="1"/>
</dbReference>
<dbReference type="Gene3D" id="2.40.30.10">
    <property type="entry name" value="Translation factors"/>
    <property type="match status" value="2"/>
</dbReference>
<dbReference type="HAMAP" id="MF_00118_B">
    <property type="entry name" value="EF_Tu_B"/>
    <property type="match status" value="1"/>
</dbReference>
<dbReference type="InterPro" id="IPR041709">
    <property type="entry name" value="EF-Tu_GTP-bd"/>
</dbReference>
<dbReference type="InterPro" id="IPR050055">
    <property type="entry name" value="EF-Tu_GTPase"/>
</dbReference>
<dbReference type="InterPro" id="IPR004161">
    <property type="entry name" value="EFTu-like_2"/>
</dbReference>
<dbReference type="InterPro" id="IPR033720">
    <property type="entry name" value="EFTU_2"/>
</dbReference>
<dbReference type="InterPro" id="IPR031157">
    <property type="entry name" value="G_TR_CS"/>
</dbReference>
<dbReference type="InterPro" id="IPR027417">
    <property type="entry name" value="P-loop_NTPase"/>
</dbReference>
<dbReference type="InterPro" id="IPR005225">
    <property type="entry name" value="Small_GTP-bd"/>
</dbReference>
<dbReference type="InterPro" id="IPR000795">
    <property type="entry name" value="T_Tr_GTP-bd_dom"/>
</dbReference>
<dbReference type="InterPro" id="IPR009000">
    <property type="entry name" value="Transl_B-barrel_sf"/>
</dbReference>
<dbReference type="InterPro" id="IPR009001">
    <property type="entry name" value="Transl_elong_EF1A/Init_IF2_C"/>
</dbReference>
<dbReference type="InterPro" id="IPR004541">
    <property type="entry name" value="Transl_elong_EFTu/EF1A_bac/org"/>
</dbReference>
<dbReference type="InterPro" id="IPR004160">
    <property type="entry name" value="Transl_elong_EFTu/EF1A_C"/>
</dbReference>
<dbReference type="NCBIfam" id="TIGR00485">
    <property type="entry name" value="EF-Tu"/>
    <property type="match status" value="1"/>
</dbReference>
<dbReference type="NCBIfam" id="NF000766">
    <property type="entry name" value="PRK00049.1"/>
    <property type="match status" value="1"/>
</dbReference>
<dbReference type="NCBIfam" id="NF009372">
    <property type="entry name" value="PRK12735.1"/>
    <property type="match status" value="1"/>
</dbReference>
<dbReference type="NCBIfam" id="NF009373">
    <property type="entry name" value="PRK12736.1"/>
    <property type="match status" value="1"/>
</dbReference>
<dbReference type="NCBIfam" id="TIGR00231">
    <property type="entry name" value="small_GTP"/>
    <property type="match status" value="1"/>
</dbReference>
<dbReference type="PANTHER" id="PTHR43721:SF22">
    <property type="entry name" value="ELONGATION FACTOR TU, MITOCHONDRIAL"/>
    <property type="match status" value="1"/>
</dbReference>
<dbReference type="PANTHER" id="PTHR43721">
    <property type="entry name" value="ELONGATION FACTOR TU-RELATED"/>
    <property type="match status" value="1"/>
</dbReference>
<dbReference type="Pfam" id="PF00009">
    <property type="entry name" value="GTP_EFTU"/>
    <property type="match status" value="1"/>
</dbReference>
<dbReference type="Pfam" id="PF03144">
    <property type="entry name" value="GTP_EFTU_D2"/>
    <property type="match status" value="1"/>
</dbReference>
<dbReference type="Pfam" id="PF03143">
    <property type="entry name" value="GTP_EFTU_D3"/>
    <property type="match status" value="1"/>
</dbReference>
<dbReference type="PRINTS" id="PR00315">
    <property type="entry name" value="ELONGATNFCT"/>
</dbReference>
<dbReference type="SUPFAM" id="SSF50465">
    <property type="entry name" value="EF-Tu/eEF-1alpha/eIF2-gamma C-terminal domain"/>
    <property type="match status" value="1"/>
</dbReference>
<dbReference type="SUPFAM" id="SSF52540">
    <property type="entry name" value="P-loop containing nucleoside triphosphate hydrolases"/>
    <property type="match status" value="1"/>
</dbReference>
<dbReference type="SUPFAM" id="SSF50447">
    <property type="entry name" value="Translation proteins"/>
    <property type="match status" value="1"/>
</dbReference>
<dbReference type="PROSITE" id="PS00301">
    <property type="entry name" value="G_TR_1"/>
    <property type="match status" value="1"/>
</dbReference>
<dbReference type="PROSITE" id="PS51722">
    <property type="entry name" value="G_TR_2"/>
    <property type="match status" value="1"/>
</dbReference>
<accession>B8G1W4</accession>
<protein>
    <recommendedName>
        <fullName evidence="2">Elongation factor Tu</fullName>
        <shortName evidence="2">EF-Tu</shortName>
        <ecNumber evidence="2">3.6.5.3</ecNumber>
    </recommendedName>
</protein>
<organism>
    <name type="scientific">Desulfitobacterium hafniense (strain DSM 10664 / DCB-2)</name>
    <dbReference type="NCBI Taxonomy" id="272564"/>
    <lineage>
        <taxon>Bacteria</taxon>
        <taxon>Bacillati</taxon>
        <taxon>Bacillota</taxon>
        <taxon>Clostridia</taxon>
        <taxon>Eubacteriales</taxon>
        <taxon>Desulfitobacteriaceae</taxon>
        <taxon>Desulfitobacterium</taxon>
    </lineage>
</organism>
<name>EFTU_DESHD</name>
<gene>
    <name evidence="2" type="primary">tuf</name>
    <name type="ordered locus">Dhaf_0420</name>
</gene>
<sequence>MAKQKFERTKPHVNVGTIGHVDHGKTTSTAAITLVLSKAGGAVAQAFDQIDKAPEERERGITISTSHVEYETANRHYAHVDCPGHADYVKNMITGAAQMDGAILVVSAADGPMPQTREHILLARQVGVPYIVVWLNKADMVDDPELMELVEMEIRELLSEYEFPGDDIPIIPGSGLKALQCGCGSRDCEWCGKIWNLMDAVDSYIPTPERATDKPFLMPVEDVFTITGRGTVATGRVERGVIKVGDEIEIVGLTEAPRKTVCTGVEMFRKLLDQAQAGDNIGALLRGVDRKDIERGQVLAKTGSIKPHTKFTGEVFVLSKEEGGRHTPFFNNYRPQFYFRTTDVTGVVTLPEGTEMVMPGDRVTITCEIISPIAMEEGLRFAIREGGRTVGAGVVVSIIE</sequence>